<dbReference type="PDB" id="1OGQ">
    <property type="method" value="X-ray"/>
    <property type="resolution" value="1.70 A"/>
    <property type="chains" value="A=30-342"/>
</dbReference>
<dbReference type="PDB" id="8IKW">
    <property type="method" value="X-ray"/>
    <property type="resolution" value="1.94 A"/>
    <property type="chains" value="A/C/E/G=30-342"/>
</dbReference>
<dbReference type="PDBsum" id="1OGQ"/>
<dbReference type="PDBsum" id="8IKW"/>
<dbReference type="SMR" id="P58822"/>
<dbReference type="GlyConnect" id="507">
    <property type="glycosylation" value="1 N-Linked glycan"/>
</dbReference>
<dbReference type="GlyCosmos" id="P58822">
    <property type="glycosylation" value="3 sites, 1 glycan"/>
</dbReference>
<dbReference type="iPTMnet" id="P58822"/>
<dbReference type="eggNOG" id="ENOG502QRQP">
    <property type="taxonomic scope" value="Eukaryota"/>
</dbReference>
<dbReference type="EvolutionaryTrace" id="P58822"/>
<dbReference type="GO" id="GO:0005576">
    <property type="term" value="C:extracellular region"/>
    <property type="evidence" value="ECO:0007669"/>
    <property type="project" value="UniProtKB-KW"/>
</dbReference>
<dbReference type="GO" id="GO:0016020">
    <property type="term" value="C:membrane"/>
    <property type="evidence" value="ECO:0007669"/>
    <property type="project" value="UniProtKB-SubCell"/>
</dbReference>
<dbReference type="GO" id="GO:0006952">
    <property type="term" value="P:defense response"/>
    <property type="evidence" value="ECO:0007669"/>
    <property type="project" value="UniProtKB-KW"/>
</dbReference>
<dbReference type="FunFam" id="3.80.10.10:FF:000400">
    <property type="entry name" value="Nuclear pore complex protein NUP107"/>
    <property type="match status" value="1"/>
</dbReference>
<dbReference type="Gene3D" id="3.80.10.10">
    <property type="entry name" value="Ribonuclease Inhibitor"/>
    <property type="match status" value="1"/>
</dbReference>
<dbReference type="InterPro" id="IPR001611">
    <property type="entry name" value="Leu-rich_rpt"/>
</dbReference>
<dbReference type="InterPro" id="IPR032675">
    <property type="entry name" value="LRR_dom_sf"/>
</dbReference>
<dbReference type="InterPro" id="IPR013210">
    <property type="entry name" value="LRR_N_plant-typ"/>
</dbReference>
<dbReference type="InterPro" id="IPR051848">
    <property type="entry name" value="PGIP"/>
</dbReference>
<dbReference type="PANTHER" id="PTHR48059:SF24">
    <property type="entry name" value="POLYGALACTURONASE INHIBITOR"/>
    <property type="match status" value="1"/>
</dbReference>
<dbReference type="PANTHER" id="PTHR48059">
    <property type="entry name" value="POLYGALACTURONASE INHIBITOR 1"/>
    <property type="match status" value="1"/>
</dbReference>
<dbReference type="Pfam" id="PF00560">
    <property type="entry name" value="LRR_1"/>
    <property type="match status" value="3"/>
</dbReference>
<dbReference type="Pfam" id="PF08263">
    <property type="entry name" value="LRRNT_2"/>
    <property type="match status" value="1"/>
</dbReference>
<dbReference type="SUPFAM" id="SSF52058">
    <property type="entry name" value="L domain-like"/>
    <property type="match status" value="1"/>
</dbReference>
<reference key="1">
    <citation type="journal article" date="1999" name="EMBO J.">
        <title>The specificity of polygalacturonase-inhibiting protein (PGIP): a single amino acid substitution in the solvent-exposed beta-strand/beta-turn region of the leucine-rich repeats (LRRs) confers a new recognition capability.</title>
        <authorList>
            <person name="Leckie F."/>
            <person name="Mattei B."/>
            <person name="Capodicasa C."/>
            <person name="Hemmings A."/>
            <person name="Nuss L."/>
            <person name="Aracri B."/>
            <person name="De Lorenzo G."/>
            <person name="Cervone F."/>
        </authorList>
    </citation>
    <scope>NUCLEOTIDE SEQUENCE</scope>
    <scope>FUNCTION</scope>
    <scope>MUTAGENESIS OF LEU-89; VAL-181; SER-207; GLN-253; HIS-300; GLN-320; ALA-326 AND ALA-340</scope>
    <source>
        <strain>cv. Pinto</strain>
        <tissue>Hypocotyl</tissue>
    </source>
</reference>
<reference key="2">
    <citation type="journal article" date="2001" name="Biochemistry">
        <title>Secondary structure and posttranslational modifications of the leucine-rich repeat protein PGIP (polygalacturonase-inhibiting protein) from Phaseolus vulgaris.</title>
        <authorList>
            <person name="Mattei B."/>
            <person name="Bernalda M.S."/>
            <person name="Federici L."/>
            <person name="Roepstorff P."/>
            <person name="Cervone F."/>
            <person name="Boffi A."/>
        </authorList>
    </citation>
    <scope>STRUCTURE OF CARBOHYDRATES ON ASN-64 AND ASN-141</scope>
    <scope>GLYCOSYLATION AT ASN-64 AND ASN-141</scope>
    <scope>DISULFIDE BONDS</scope>
</reference>
<reference key="3">
    <citation type="journal article" date="2003" name="Proc. Natl. Acad. Sci. U.S.A.">
        <title>The crystal structure of polygalacturonase-inhibiting protein (PGIP), a leucine-rich repeat protein involved in plant defense.</title>
        <authorList>
            <person name="Di Matteo A."/>
            <person name="Federici L."/>
            <person name="Mattei B."/>
            <person name="Salvi G."/>
            <person name="Johnson K.A."/>
            <person name="Savino C."/>
            <person name="De Lorenzo G."/>
            <person name="Tsernoglou D."/>
            <person name="Cervone F."/>
        </authorList>
    </citation>
    <scope>X-RAY CRYSTALLOGRAPHY (1.7 ANGSTROMS) OF 30-342</scope>
    <scope>DISULFIDE BONDS</scope>
    <scope>LEUCINE-RICH REPEATS</scope>
    <scope>GLYCOSYLATION AT ASN-64; ASN-141 AND ASN-303</scope>
</reference>
<keyword id="KW-0002">3D-structure</keyword>
<keyword id="KW-0134">Cell wall</keyword>
<keyword id="KW-1015">Disulfide bond</keyword>
<keyword id="KW-0325">Glycoprotein</keyword>
<keyword id="KW-0433">Leucine-rich repeat</keyword>
<keyword id="KW-0472">Membrane</keyword>
<keyword id="KW-0611">Plant defense</keyword>
<keyword id="KW-0677">Repeat</keyword>
<keyword id="KW-0964">Secreted</keyword>
<keyword id="KW-0732">Signal</keyword>
<organism>
    <name type="scientific">Phaseolus vulgaris</name>
    <name type="common">Kidney bean</name>
    <name type="synonym">French bean</name>
    <dbReference type="NCBI Taxonomy" id="3885"/>
    <lineage>
        <taxon>Eukaryota</taxon>
        <taxon>Viridiplantae</taxon>
        <taxon>Streptophyta</taxon>
        <taxon>Embryophyta</taxon>
        <taxon>Tracheophyta</taxon>
        <taxon>Spermatophyta</taxon>
        <taxon>Magnoliopsida</taxon>
        <taxon>eudicotyledons</taxon>
        <taxon>Gunneridae</taxon>
        <taxon>Pentapetalae</taxon>
        <taxon>rosids</taxon>
        <taxon>fabids</taxon>
        <taxon>Fabales</taxon>
        <taxon>Fabaceae</taxon>
        <taxon>Papilionoideae</taxon>
        <taxon>50 kb inversion clade</taxon>
        <taxon>NPAAA clade</taxon>
        <taxon>indigoferoid/millettioid clade</taxon>
        <taxon>Phaseoleae</taxon>
        <taxon>Phaseolus</taxon>
    </lineage>
</organism>
<feature type="signal peptide" evidence="1">
    <location>
        <begin position="1"/>
        <end position="29"/>
    </location>
</feature>
<feature type="chain" id="PRO_0000023886" description="Polygalacturonase inhibitor 2">
    <location>
        <begin position="30"/>
        <end position="342"/>
    </location>
</feature>
<feature type="repeat" description="LRR 1" evidence="5">
    <location>
        <begin position="82"/>
        <end position="107"/>
    </location>
</feature>
<feature type="repeat" description="LRR 2" evidence="5">
    <location>
        <begin position="108"/>
        <end position="132"/>
    </location>
</feature>
<feature type="repeat" description="LRR 3" evidence="5">
    <location>
        <begin position="133"/>
        <end position="156"/>
    </location>
</feature>
<feature type="repeat" description="LRR 4" evidence="5">
    <location>
        <begin position="157"/>
        <end position="180"/>
    </location>
</feature>
<feature type="repeat" description="LRR 5" evidence="5">
    <location>
        <begin position="181"/>
        <end position="205"/>
    </location>
</feature>
<feature type="repeat" description="LRR 6" evidence="5">
    <location>
        <begin position="206"/>
        <end position="228"/>
    </location>
</feature>
<feature type="repeat" description="LRR 7" evidence="5">
    <location>
        <begin position="229"/>
        <end position="252"/>
    </location>
</feature>
<feature type="repeat" description="LRR 8" evidence="5">
    <location>
        <begin position="253"/>
        <end position="275"/>
    </location>
</feature>
<feature type="repeat" description="LRR 9" evidence="5">
    <location>
        <begin position="276"/>
        <end position="299"/>
    </location>
</feature>
<feature type="repeat" description="LRR 10" evidence="5">
    <location>
        <begin position="300"/>
        <end position="319"/>
    </location>
</feature>
<feature type="glycosylation site" description="N-linked (GlcNAc...) (complex) asparagine" evidence="2 4 5 8">
    <location>
        <position position="64"/>
    </location>
</feature>
<feature type="glycosylation site" description="N-linked (GlcNAc...) (complex) asparagine" evidence="2 4 5 8">
    <location>
        <position position="141"/>
    </location>
</feature>
<feature type="glycosylation site" description="N-linked (GlcNAc...) asparagine" evidence="2 5 8">
    <location>
        <position position="303"/>
    </location>
</feature>
<feature type="disulfide bond" evidence="4 5 8">
    <location>
        <begin position="32"/>
        <end position="62"/>
    </location>
</feature>
<feature type="disulfide bond" evidence="4 5 8">
    <location>
        <begin position="63"/>
        <end position="72"/>
    </location>
</feature>
<feature type="disulfide bond" evidence="4 5 8">
    <location>
        <begin position="310"/>
        <end position="332"/>
    </location>
</feature>
<feature type="disulfide bond" evidence="4 5 8">
    <location>
        <begin position="334"/>
        <end position="341"/>
    </location>
</feature>
<feature type="mutagenesis site" description="No effect." evidence="3">
    <original>L</original>
    <variation>H</variation>
    <location>
        <position position="89"/>
    </location>
</feature>
<feature type="mutagenesis site" description="No effect. Loss of activity; when associated with K-253. No effect; when associated with S-326." evidence="3">
    <original>V</original>
    <variation>G</variation>
    <location>
        <position position="181"/>
    </location>
</feature>
<feature type="mutagenesis site" description="No effect." evidence="3">
    <original>S</original>
    <variation>A</variation>
    <location>
        <position position="207"/>
    </location>
</feature>
<feature type="mutagenesis site" description="70% decrease of activity. Loss of activity; when associated with G-181 or S-326." evidence="3">
    <original>Q</original>
    <variation>K</variation>
    <location>
        <position position="253"/>
    </location>
</feature>
<feature type="mutagenesis site" description="No effect." evidence="3">
    <original>H</original>
    <variation>Q</variation>
    <location>
        <position position="300"/>
    </location>
</feature>
<feature type="mutagenesis site" description="No effect." evidence="3">
    <original>Q</original>
    <variation>K</variation>
    <location>
        <position position="320"/>
    </location>
</feature>
<feature type="mutagenesis site" description="No effect. No effect; when associated with G-181. Loss of activity; when associated with K-253." evidence="3">
    <original>A</original>
    <variation>S</variation>
    <location>
        <position position="326"/>
    </location>
</feature>
<feature type="mutagenesis site" description="No effect." evidence="3">
    <original>A</original>
    <variation>S</variation>
    <location>
        <position position="340"/>
    </location>
</feature>
<feature type="helix" evidence="9">
    <location>
        <begin position="34"/>
        <end position="46"/>
    </location>
</feature>
<feature type="helix" evidence="9">
    <location>
        <begin position="51"/>
        <end position="53"/>
    </location>
</feature>
<feature type="turn" evidence="9">
    <location>
        <begin position="62"/>
        <end position="65"/>
    </location>
</feature>
<feature type="strand" evidence="9">
    <location>
        <begin position="70"/>
        <end position="72"/>
    </location>
</feature>
<feature type="strand" evidence="9">
    <location>
        <begin position="75"/>
        <end position="77"/>
    </location>
</feature>
<feature type="strand" evidence="9">
    <location>
        <begin position="81"/>
        <end position="87"/>
    </location>
</feature>
<feature type="helix" evidence="9">
    <location>
        <begin position="99"/>
        <end position="103"/>
    </location>
</feature>
<feature type="strand" evidence="9">
    <location>
        <begin position="108"/>
        <end position="115"/>
    </location>
</feature>
<feature type="strand" evidence="9">
    <location>
        <begin position="118"/>
        <end position="120"/>
    </location>
</feature>
<feature type="helix" evidence="9">
    <location>
        <begin position="124"/>
        <end position="128"/>
    </location>
</feature>
<feature type="strand" evidence="9">
    <location>
        <begin position="133"/>
        <end position="140"/>
    </location>
</feature>
<feature type="strand" evidence="9">
    <location>
        <begin position="143"/>
        <end position="145"/>
    </location>
</feature>
<feature type="helix" evidence="9">
    <location>
        <begin position="148"/>
        <end position="152"/>
    </location>
</feature>
<feature type="strand" evidence="9">
    <location>
        <begin position="158"/>
        <end position="160"/>
    </location>
</feature>
<feature type="strand" evidence="9">
    <location>
        <begin position="163"/>
        <end position="168"/>
    </location>
</feature>
<feature type="helix" evidence="9">
    <location>
        <begin position="172"/>
        <end position="176"/>
    </location>
</feature>
<feature type="strand" evidence="9">
    <location>
        <begin position="182"/>
        <end position="184"/>
    </location>
</feature>
<feature type="strand" evidence="9">
    <location>
        <begin position="191"/>
        <end position="193"/>
    </location>
</feature>
<feature type="helix" evidence="9">
    <location>
        <begin position="196"/>
        <end position="199"/>
    </location>
</feature>
<feature type="strand" evidence="9">
    <location>
        <begin position="207"/>
        <end position="209"/>
    </location>
</feature>
<feature type="strand" evidence="9">
    <location>
        <begin position="212"/>
        <end position="218"/>
    </location>
</feature>
<feature type="helix" evidence="9">
    <location>
        <begin position="221"/>
        <end position="225"/>
    </location>
</feature>
<feature type="strand" evidence="9">
    <location>
        <begin position="229"/>
        <end position="232"/>
    </location>
</feature>
<feature type="strand" evidence="9">
    <location>
        <begin position="235"/>
        <end position="240"/>
    </location>
</feature>
<feature type="helix" evidence="9">
    <location>
        <begin position="243"/>
        <end position="245"/>
    </location>
</feature>
<feature type="strand" evidence="9">
    <location>
        <begin position="253"/>
        <end position="256"/>
    </location>
</feature>
<feature type="strand" evidence="9">
    <location>
        <begin position="259"/>
        <end position="262"/>
    </location>
</feature>
<feature type="helix" evidence="9">
    <location>
        <begin position="266"/>
        <end position="268"/>
    </location>
</feature>
<feature type="strand" evidence="9">
    <location>
        <begin position="277"/>
        <end position="279"/>
    </location>
</feature>
<feature type="helix" evidence="9">
    <location>
        <begin position="291"/>
        <end position="295"/>
    </location>
</feature>
<feature type="strand" evidence="9">
    <location>
        <begin position="301"/>
        <end position="303"/>
    </location>
</feature>
<feature type="strand" evidence="9">
    <location>
        <begin position="306"/>
        <end position="312"/>
    </location>
</feature>
<feature type="helix" evidence="9">
    <location>
        <begin position="319"/>
        <end position="321"/>
    </location>
</feature>
<feature type="helix" evidence="9">
    <location>
        <begin position="324"/>
        <end position="326"/>
    </location>
</feature>
<feature type="strand" evidence="9">
    <location>
        <begin position="329"/>
        <end position="335"/>
    </location>
</feature>
<protein>
    <recommendedName>
        <fullName>Polygalacturonase inhibitor 2</fullName>
    </recommendedName>
    <alternativeName>
        <fullName>Polygalacturonase-inhibiting protein 2</fullName>
        <shortName>PGIP-2</shortName>
    </alternativeName>
</protein>
<proteinExistence type="evidence at protein level"/>
<evidence type="ECO:0000255" key="1"/>
<evidence type="ECO:0000255" key="2">
    <source>
        <dbReference type="PROSITE-ProRule" id="PRU00498"/>
    </source>
</evidence>
<evidence type="ECO:0000269" key="3">
    <source>
    </source>
</evidence>
<evidence type="ECO:0000269" key="4">
    <source>
    </source>
</evidence>
<evidence type="ECO:0000269" key="5">
    <source>
    </source>
</evidence>
<evidence type="ECO:0000305" key="6"/>
<evidence type="ECO:0000305" key="7">
    <source>
    </source>
</evidence>
<evidence type="ECO:0007744" key="8">
    <source>
        <dbReference type="PDB" id="1OGQ"/>
    </source>
</evidence>
<evidence type="ECO:0007829" key="9">
    <source>
        <dbReference type="PDB" id="1OGQ"/>
    </source>
</evidence>
<sequence length="342" mass="37068">MTQFNIPVTMSSSLSIILVILVSLSTAHSELCNPQDKQALLQIKKDLGNPTTLSSWLPTTDCCNRTWLGVLCDTDTQTYRVNNLDLSGLNLPKPYPIPSSLANLPYLNFLYIGGINNLVGPIPPAIAKLTQLHYLYITHTNVSGAIPDFLSQIKTLVTLDFSYNALSGTLPPSISSLPNLVGITFDGNRISGAIPDSYGSFSKLFTSMTISRNRLTGKIPPTFANLNLAFVDLSRNMLEGDASVLFGSDKNTQKIHLAKNSLAFDLGKVGLSKNLNGLDLRNNRIYGTLPQGLTQLKFLHSLNVSFNNLCGEIPQGGNLQRFDVSAYANNKCLCGSPLPACT</sequence>
<gene>
    <name type="primary">PGIP2</name>
</gene>
<name>PGIP2_PHAVU</name>
<accession>P58822</accession>
<comment type="function">
    <text evidence="3">Inhibitor of fungal polygalacturonase. It is an important factor for plant resistance to phytopathogenic fungi. Inhibits all polygalacturonases (PG) tested, with the exception of PG from F.oxysporum which was only inhibited at 60%.</text>
</comment>
<comment type="subcellular location">
    <subcellularLocation>
        <location evidence="7">Secreted</location>
        <location evidence="7">Cell wall</location>
    </subcellularLocation>
    <subcellularLocation>
        <location>Membrane</location>
        <topology>Peripheral membrane protein</topology>
    </subcellularLocation>
</comment>
<comment type="PTM">
    <text evidence="4">Asn-303 is not glycosylated.</text>
</comment>
<comment type="similarity">
    <text evidence="6">Belongs to the polygalacturonase-inhibiting protein family.</text>
</comment>
<comment type="caution">
    <text evidence="6">It is uncertain whether Met-1 or Met-10 is the initiator.</text>
</comment>